<dbReference type="EMBL" id="CP000388">
    <property type="protein sequence ID" value="ABG40981.1"/>
    <property type="molecule type" value="Genomic_DNA"/>
</dbReference>
<dbReference type="RefSeq" id="WP_006991151.1">
    <property type="nucleotide sequence ID" value="NC_008228.1"/>
</dbReference>
<dbReference type="SMR" id="Q15T07"/>
<dbReference type="STRING" id="342610.Patl_2465"/>
<dbReference type="KEGG" id="pat:Patl_2465"/>
<dbReference type="eggNOG" id="COG0776">
    <property type="taxonomic scope" value="Bacteria"/>
</dbReference>
<dbReference type="HOGENOM" id="CLU_105066_2_0_6"/>
<dbReference type="OrthoDB" id="9804203at2"/>
<dbReference type="Proteomes" id="UP000001981">
    <property type="component" value="Chromosome"/>
</dbReference>
<dbReference type="GO" id="GO:0005694">
    <property type="term" value="C:chromosome"/>
    <property type="evidence" value="ECO:0007669"/>
    <property type="project" value="InterPro"/>
</dbReference>
<dbReference type="GO" id="GO:0005829">
    <property type="term" value="C:cytosol"/>
    <property type="evidence" value="ECO:0007669"/>
    <property type="project" value="TreeGrafter"/>
</dbReference>
<dbReference type="GO" id="GO:0003677">
    <property type="term" value="F:DNA binding"/>
    <property type="evidence" value="ECO:0007669"/>
    <property type="project" value="UniProtKB-UniRule"/>
</dbReference>
<dbReference type="GO" id="GO:0030527">
    <property type="term" value="F:structural constituent of chromatin"/>
    <property type="evidence" value="ECO:0007669"/>
    <property type="project" value="InterPro"/>
</dbReference>
<dbReference type="GO" id="GO:0006310">
    <property type="term" value="P:DNA recombination"/>
    <property type="evidence" value="ECO:0007669"/>
    <property type="project" value="UniProtKB-UniRule"/>
</dbReference>
<dbReference type="GO" id="GO:0006355">
    <property type="term" value="P:regulation of DNA-templated transcription"/>
    <property type="evidence" value="ECO:0007669"/>
    <property type="project" value="UniProtKB-UniRule"/>
</dbReference>
<dbReference type="GO" id="GO:0006417">
    <property type="term" value="P:regulation of translation"/>
    <property type="evidence" value="ECO:0007669"/>
    <property type="project" value="UniProtKB-UniRule"/>
</dbReference>
<dbReference type="CDD" id="cd13836">
    <property type="entry name" value="IHF_B"/>
    <property type="match status" value="1"/>
</dbReference>
<dbReference type="FunFam" id="4.10.520.10:FF:000003">
    <property type="entry name" value="Integration host factor subunit beta"/>
    <property type="match status" value="1"/>
</dbReference>
<dbReference type="Gene3D" id="4.10.520.10">
    <property type="entry name" value="IHF-like DNA-binding proteins"/>
    <property type="match status" value="1"/>
</dbReference>
<dbReference type="HAMAP" id="MF_00381">
    <property type="entry name" value="IHF_beta"/>
    <property type="match status" value="1"/>
</dbReference>
<dbReference type="InterPro" id="IPR000119">
    <property type="entry name" value="Hist_DNA-bd"/>
</dbReference>
<dbReference type="InterPro" id="IPR020816">
    <property type="entry name" value="Histone-like_DNA-bd_CS"/>
</dbReference>
<dbReference type="InterPro" id="IPR010992">
    <property type="entry name" value="IHF-like_DNA-bd_dom_sf"/>
</dbReference>
<dbReference type="InterPro" id="IPR005685">
    <property type="entry name" value="IHF_beta"/>
</dbReference>
<dbReference type="NCBIfam" id="TIGR00988">
    <property type="entry name" value="hip"/>
    <property type="match status" value="1"/>
</dbReference>
<dbReference type="NCBIfam" id="NF001222">
    <property type="entry name" value="PRK00199.1"/>
    <property type="match status" value="1"/>
</dbReference>
<dbReference type="PANTHER" id="PTHR33175">
    <property type="entry name" value="DNA-BINDING PROTEIN HU"/>
    <property type="match status" value="1"/>
</dbReference>
<dbReference type="PANTHER" id="PTHR33175:SF5">
    <property type="entry name" value="INTEGRATION HOST FACTOR SUBUNIT BETA"/>
    <property type="match status" value="1"/>
</dbReference>
<dbReference type="Pfam" id="PF00216">
    <property type="entry name" value="Bac_DNA_binding"/>
    <property type="match status" value="1"/>
</dbReference>
<dbReference type="PRINTS" id="PR01727">
    <property type="entry name" value="DNABINDINGHU"/>
</dbReference>
<dbReference type="SMART" id="SM00411">
    <property type="entry name" value="BHL"/>
    <property type="match status" value="1"/>
</dbReference>
<dbReference type="SUPFAM" id="SSF47729">
    <property type="entry name" value="IHF-like DNA-binding proteins"/>
    <property type="match status" value="1"/>
</dbReference>
<dbReference type="PROSITE" id="PS00045">
    <property type="entry name" value="HISTONE_LIKE"/>
    <property type="match status" value="1"/>
</dbReference>
<feature type="chain" id="PRO_1000060629" description="Integration host factor subunit beta">
    <location>
        <begin position="1"/>
        <end position="96"/>
    </location>
</feature>
<feature type="region of interest" description="Disordered" evidence="2">
    <location>
        <begin position="59"/>
        <end position="86"/>
    </location>
</feature>
<feature type="compositionally biased region" description="Basic and acidic residues" evidence="2">
    <location>
        <begin position="72"/>
        <end position="86"/>
    </location>
</feature>
<name>IHFB_PSEA6</name>
<evidence type="ECO:0000255" key="1">
    <source>
        <dbReference type="HAMAP-Rule" id="MF_00381"/>
    </source>
</evidence>
<evidence type="ECO:0000256" key="2">
    <source>
        <dbReference type="SAM" id="MobiDB-lite"/>
    </source>
</evidence>
<gene>
    <name evidence="1" type="primary">ihfB</name>
    <name evidence="1" type="synonym">himD</name>
    <name type="ordered locus">Patl_2465</name>
</gene>
<reference key="1">
    <citation type="submission" date="2006-06" db="EMBL/GenBank/DDBJ databases">
        <title>Complete sequence of Pseudoalteromonas atlantica T6c.</title>
        <authorList>
            <consortium name="US DOE Joint Genome Institute"/>
            <person name="Copeland A."/>
            <person name="Lucas S."/>
            <person name="Lapidus A."/>
            <person name="Barry K."/>
            <person name="Detter J.C."/>
            <person name="Glavina del Rio T."/>
            <person name="Hammon N."/>
            <person name="Israni S."/>
            <person name="Dalin E."/>
            <person name="Tice H."/>
            <person name="Pitluck S."/>
            <person name="Saunders E."/>
            <person name="Brettin T."/>
            <person name="Bruce D."/>
            <person name="Han C."/>
            <person name="Tapia R."/>
            <person name="Gilna P."/>
            <person name="Schmutz J."/>
            <person name="Larimer F."/>
            <person name="Land M."/>
            <person name="Hauser L."/>
            <person name="Kyrpides N."/>
            <person name="Kim E."/>
            <person name="Karls A.C."/>
            <person name="Bartlett D."/>
            <person name="Higgins B.P."/>
            <person name="Richardson P."/>
        </authorList>
    </citation>
    <scope>NUCLEOTIDE SEQUENCE [LARGE SCALE GENOMIC DNA]</scope>
    <source>
        <strain>T6c / ATCC BAA-1087</strain>
    </source>
</reference>
<keyword id="KW-0233">DNA recombination</keyword>
<keyword id="KW-0238">DNA-binding</keyword>
<keyword id="KW-0804">Transcription</keyword>
<keyword id="KW-0805">Transcription regulation</keyword>
<keyword id="KW-0810">Translation regulation</keyword>
<comment type="function">
    <text evidence="1">This protein is one of the two subunits of integration host factor, a specific DNA-binding protein that functions in genetic recombination as well as in transcriptional and translational control.</text>
</comment>
<comment type="subunit">
    <text evidence="1">Heterodimer of an alpha and a beta chain.</text>
</comment>
<comment type="similarity">
    <text evidence="1">Belongs to the bacterial histone-like protein family.</text>
</comment>
<protein>
    <recommendedName>
        <fullName evidence="1">Integration host factor subunit beta</fullName>
        <shortName evidence="1">IHF-beta</shortName>
    </recommendedName>
</protein>
<organism>
    <name type="scientific">Pseudoalteromonas atlantica (strain T6c / ATCC BAA-1087)</name>
    <dbReference type="NCBI Taxonomy" id="3042615"/>
    <lineage>
        <taxon>Bacteria</taxon>
        <taxon>Pseudomonadati</taxon>
        <taxon>Pseudomonadota</taxon>
        <taxon>Gammaproteobacteria</taxon>
        <taxon>Alteromonadales</taxon>
        <taxon>Alteromonadaceae</taxon>
        <taxon>Paraglaciecola</taxon>
    </lineage>
</organism>
<sequence>MTKSELIERLADKARHVPSRDVELAIKEMLEQMAQTLQKGERIEIRGFGSFSLHYRAPRVGRNPKTGETVELDGKHVPHFKPGKELRERVNEDLIA</sequence>
<accession>Q15T07</accession>
<proteinExistence type="inferred from homology"/>